<organism>
    <name type="scientific">Macaca mulatta</name>
    <name type="common">Rhesus macaque</name>
    <dbReference type="NCBI Taxonomy" id="9544"/>
    <lineage>
        <taxon>Eukaryota</taxon>
        <taxon>Metazoa</taxon>
        <taxon>Chordata</taxon>
        <taxon>Craniata</taxon>
        <taxon>Vertebrata</taxon>
        <taxon>Euteleostomi</taxon>
        <taxon>Mammalia</taxon>
        <taxon>Eutheria</taxon>
        <taxon>Euarchontoglires</taxon>
        <taxon>Primates</taxon>
        <taxon>Haplorrhini</taxon>
        <taxon>Catarrhini</taxon>
        <taxon>Cercopithecidae</taxon>
        <taxon>Cercopithecinae</taxon>
        <taxon>Macaca</taxon>
    </lineage>
</organism>
<feature type="chain" id="PRO_0000082319" description="Taste receptor type 2 member 46">
    <location>
        <begin position="1"/>
        <end position="308"/>
    </location>
</feature>
<feature type="topological domain" description="Extracellular" evidence="2">
    <location>
        <position position="1"/>
    </location>
</feature>
<feature type="transmembrane region" description="Helical; Name=1" evidence="2">
    <location>
        <begin position="2"/>
        <end position="22"/>
    </location>
</feature>
<feature type="topological domain" description="Cytoplasmic" evidence="2">
    <location>
        <begin position="23"/>
        <end position="46"/>
    </location>
</feature>
<feature type="transmembrane region" description="Helical; Name=2" evidence="2">
    <location>
        <begin position="47"/>
        <end position="67"/>
    </location>
</feature>
<feature type="topological domain" description="Extracellular" evidence="2">
    <location>
        <begin position="68"/>
        <end position="86"/>
    </location>
</feature>
<feature type="transmembrane region" description="Helical; Name=3" evidence="2">
    <location>
        <begin position="87"/>
        <end position="107"/>
    </location>
</feature>
<feature type="topological domain" description="Cytoplasmic" evidence="2">
    <location>
        <begin position="108"/>
        <end position="126"/>
    </location>
</feature>
<feature type="transmembrane region" description="Helical; Name=4" evidence="2">
    <location>
        <begin position="127"/>
        <end position="147"/>
    </location>
</feature>
<feature type="topological domain" description="Extracellular" evidence="2">
    <location>
        <begin position="148"/>
        <end position="178"/>
    </location>
</feature>
<feature type="transmembrane region" description="Helical; Name=5" evidence="2">
    <location>
        <begin position="179"/>
        <end position="199"/>
    </location>
</feature>
<feature type="topological domain" description="Cytoplasmic" evidence="2">
    <location>
        <begin position="200"/>
        <end position="229"/>
    </location>
</feature>
<feature type="transmembrane region" description="Helical; Name=6" evidence="2">
    <location>
        <begin position="230"/>
        <end position="250"/>
    </location>
</feature>
<feature type="topological domain" description="Extracellular" evidence="2">
    <location>
        <begin position="251"/>
        <end position="258"/>
    </location>
</feature>
<feature type="transmembrane region" description="Helical; Name=7" evidence="2">
    <location>
        <begin position="259"/>
        <end position="279"/>
    </location>
</feature>
<feature type="topological domain" description="Cytoplasmic" evidence="2">
    <location>
        <begin position="280"/>
        <end position="308"/>
    </location>
</feature>
<feature type="glycosylation site" description="N-linked (GlcNAc...) asparagine" evidence="2">
    <location>
        <position position="161"/>
    </location>
</feature>
<feature type="glycosylation site" description="N-linked (GlcNAc...) asparagine" evidence="2">
    <location>
        <position position="176"/>
    </location>
</feature>
<dbReference type="EMBL" id="AY725005">
    <property type="protein sequence ID" value="AAU21185.1"/>
    <property type="molecule type" value="Genomic_DNA"/>
</dbReference>
<dbReference type="RefSeq" id="NP_001074226.1">
    <property type="nucleotide sequence ID" value="NM_001080757.2"/>
</dbReference>
<dbReference type="RefSeq" id="XP_015006561.1">
    <property type="nucleotide sequence ID" value="XM_015151075.1"/>
</dbReference>
<dbReference type="RefSeq" id="XP_015006562.1">
    <property type="nucleotide sequence ID" value="XM_015151076.1"/>
</dbReference>
<dbReference type="RefSeq" id="XP_015006563.1">
    <property type="nucleotide sequence ID" value="XM_015151077.1"/>
</dbReference>
<dbReference type="SMR" id="Q645T4"/>
<dbReference type="GlyCosmos" id="Q645T4">
    <property type="glycosylation" value="2 sites, No reported glycans"/>
</dbReference>
<dbReference type="PaxDb" id="9544-ENSMMUP00000040193"/>
<dbReference type="GeneID" id="694814"/>
<dbReference type="KEGG" id="mcc:694814"/>
<dbReference type="CTD" id="259292"/>
<dbReference type="eggNOG" id="ENOG502TE6U">
    <property type="taxonomic scope" value="Eukaryota"/>
</dbReference>
<dbReference type="HOGENOM" id="CLU_072337_2_0_1"/>
<dbReference type="InParanoid" id="Q645T4"/>
<dbReference type="OrthoDB" id="9484230at2759"/>
<dbReference type="TreeFam" id="TF335891"/>
<dbReference type="Proteomes" id="UP000006718">
    <property type="component" value="Unassembled WGS sequence"/>
</dbReference>
<dbReference type="GO" id="GO:0060170">
    <property type="term" value="C:ciliary membrane"/>
    <property type="evidence" value="ECO:0007669"/>
    <property type="project" value="UniProtKB-SubCell"/>
</dbReference>
<dbReference type="GO" id="GO:0016020">
    <property type="term" value="C:membrane"/>
    <property type="evidence" value="ECO:0000318"/>
    <property type="project" value="GO_Central"/>
</dbReference>
<dbReference type="GO" id="GO:0033038">
    <property type="term" value="F:bitter taste receptor activity"/>
    <property type="evidence" value="ECO:0000318"/>
    <property type="project" value="GO_Central"/>
</dbReference>
<dbReference type="GO" id="GO:0004930">
    <property type="term" value="F:G protein-coupled receptor activity"/>
    <property type="evidence" value="ECO:0007669"/>
    <property type="project" value="UniProtKB-KW"/>
</dbReference>
<dbReference type="GO" id="GO:0001580">
    <property type="term" value="P:detection of chemical stimulus involved in sensory perception of bitter taste"/>
    <property type="evidence" value="ECO:0000318"/>
    <property type="project" value="GO_Central"/>
</dbReference>
<dbReference type="CDD" id="cd15027">
    <property type="entry name" value="7tm_TAS2R43-like"/>
    <property type="match status" value="1"/>
</dbReference>
<dbReference type="FunFam" id="1.20.1070.10:FF:000042">
    <property type="entry name" value="Taste receptor type 2 member 7"/>
    <property type="match status" value="1"/>
</dbReference>
<dbReference type="Gene3D" id="1.20.1070.10">
    <property type="entry name" value="Rhodopsin 7-helix transmembrane proteins"/>
    <property type="match status" value="1"/>
</dbReference>
<dbReference type="InterPro" id="IPR007960">
    <property type="entry name" value="TAS2R"/>
</dbReference>
<dbReference type="PANTHER" id="PTHR11394">
    <property type="entry name" value="TASTE RECEPTOR TYPE 2"/>
    <property type="match status" value="1"/>
</dbReference>
<dbReference type="PANTHER" id="PTHR11394:SF48">
    <property type="entry name" value="TASTE RECEPTOR TYPE 2 MEMBER 30"/>
    <property type="match status" value="1"/>
</dbReference>
<dbReference type="Pfam" id="PF05296">
    <property type="entry name" value="TAS2R"/>
    <property type="match status" value="1"/>
</dbReference>
<dbReference type="SUPFAM" id="SSF81321">
    <property type="entry name" value="Family A G protein-coupled receptor-like"/>
    <property type="match status" value="1"/>
</dbReference>
<evidence type="ECO:0000250" key="1"/>
<evidence type="ECO:0000255" key="2"/>
<evidence type="ECO:0000305" key="3"/>
<name>T2R46_MACMU</name>
<sequence length="308" mass="35462">MITFLSITFSILVGVIFVIGNFANGFIALVNSIEWVKRQKISFADQILTGLAVSRVGLLWVLLLHLYATEFNLAFYSVEVRITAYNVWIVTNHFSNWLSTSLSMFYLLKIATFSNLIFLHLKRKVKSVILVTLLGPLLFLVCHLFVMNMNHIVWRKEYEGNITWRIKLRSAMYLSNVTVTMLANLIPLTLTLMSFLLLICSLCKHLKKMQVHGKGSQDPSTKVHIKALQTVTSFLLLCAIYFLSMILSVWNFELEKKPVFMFCQAVIFSYPSTHPLILIWGNKKLKQIFLSVLWNVRYWVKGQKPSSP</sequence>
<comment type="function">
    <text evidence="1">Receptor that may play a role in the perception of bitterness and is gustducin-linked. May play a role in sensing the chemical composition of the gastrointestinal content. The activity of this receptor may stimulate alpha gustducin, mediate PLC-beta-2 activation and lead to the gating of TRPM5 (By similarity). In airway epithelial cells, binding of bitter compounds increases the intracellular calcium ion concentration and stimulates ciliary beat frequency (By similarity).</text>
</comment>
<comment type="subcellular location">
    <subcellularLocation>
        <location>Membrane</location>
        <topology>Multi-pass membrane protein</topology>
    </subcellularLocation>
    <subcellularLocation>
        <location>Cell projection</location>
        <location>Cilium membrane</location>
    </subcellularLocation>
    <text evidence="1">In airway epithelial cells, localizes to motile cilia.</text>
</comment>
<comment type="miscellaneous">
    <text>Most taste cells may be activated by a limited number of bitter compounds; individual taste cells can discriminate among bitter stimuli.</text>
</comment>
<comment type="similarity">
    <text evidence="3">Belongs to the G-protein coupled receptor T2R family.</text>
</comment>
<protein>
    <recommendedName>
        <fullName>Taste receptor type 2 member 46</fullName>
        <shortName>T2R46</shortName>
    </recommendedName>
</protein>
<keyword id="KW-1003">Cell membrane</keyword>
<keyword id="KW-0966">Cell projection</keyword>
<keyword id="KW-0969">Cilium</keyword>
<keyword id="KW-0297">G-protein coupled receptor</keyword>
<keyword id="KW-0325">Glycoprotein</keyword>
<keyword id="KW-0472">Membrane</keyword>
<keyword id="KW-0675">Receptor</keyword>
<keyword id="KW-1185">Reference proteome</keyword>
<keyword id="KW-0716">Sensory transduction</keyword>
<keyword id="KW-0919">Taste</keyword>
<keyword id="KW-0807">Transducer</keyword>
<keyword id="KW-0812">Transmembrane</keyword>
<keyword id="KW-1133">Transmembrane helix</keyword>
<gene>
    <name type="primary">TAS2R46</name>
</gene>
<accession>Q645T4</accession>
<reference key="1">
    <citation type="journal article" date="2005" name="Mol. Biol. Evol.">
        <title>Evolution of bitter taste receptors in humans and apes.</title>
        <authorList>
            <person name="Fischer A."/>
            <person name="Gilad Y."/>
            <person name="Man O."/>
            <person name="Paeaebo S."/>
        </authorList>
    </citation>
    <scope>NUCLEOTIDE SEQUENCE [GENOMIC DNA]</scope>
</reference>
<proteinExistence type="inferred from homology"/>